<comment type="subunit">
    <text evidence="1">Homodimer and heterodimers.</text>
</comment>
<comment type="subcellular location">
    <subcellularLocation>
        <location evidence="1">Cell membrane</location>
        <topology evidence="1">Multi-pass membrane protein</topology>
    </subcellularLocation>
</comment>
<comment type="similarity">
    <text evidence="4">Belongs to the Casparian strip membrane proteins (CASP) family.</text>
</comment>
<name>CSPL1_TRIPD</name>
<keyword id="KW-1003">Cell membrane</keyword>
<keyword id="KW-0472">Membrane</keyword>
<keyword id="KW-0812">Transmembrane</keyword>
<keyword id="KW-1133">Transmembrane helix</keyword>
<sequence length="174" mass="18561">MDSKSGRSESAINIPESNSTKHKSTAVHTATKVAAVAPRGGGWRRGVSIFDFILRICALAAALAATATMGTTDQTLPFFTQIIQFQASYDDLPVFTFFVVANGIASGYLVLSLPFSIATIVRPHAAAIKLLLIIFDTQFNDFCQRVSGAVVASFVAAVILIFLVVLSAVAIRKH</sequence>
<organism>
    <name type="scientific">Triphysaria pusilla</name>
    <name type="common">Dwarf owl's-clover</name>
    <name type="synonym">Orthocarpus pusillus</name>
    <dbReference type="NCBI Taxonomy" id="188295"/>
    <lineage>
        <taxon>Eukaryota</taxon>
        <taxon>Viridiplantae</taxon>
        <taxon>Streptophyta</taxon>
        <taxon>Embryophyta</taxon>
        <taxon>Tracheophyta</taxon>
        <taxon>Spermatophyta</taxon>
        <taxon>Magnoliopsida</taxon>
        <taxon>eudicotyledons</taxon>
        <taxon>Gunneridae</taxon>
        <taxon>Pentapetalae</taxon>
        <taxon>asterids</taxon>
        <taxon>lamiids</taxon>
        <taxon>Lamiales</taxon>
        <taxon>Orobanchaceae</taxon>
        <taxon>Pedicularideae</taxon>
        <taxon>Castillejinae</taxon>
        <taxon>Triphysaria</taxon>
    </lineage>
</organism>
<evidence type="ECO:0000250" key="1"/>
<evidence type="ECO:0000255" key="2"/>
<evidence type="ECO:0000256" key="3">
    <source>
        <dbReference type="SAM" id="MobiDB-lite"/>
    </source>
</evidence>
<evidence type="ECO:0000305" key="4"/>
<feature type="chain" id="PRO_0000417813" description="CASP-like protein 1">
    <location>
        <begin position="1"/>
        <end position="174"/>
    </location>
</feature>
<feature type="topological domain" description="Cytoplasmic" evidence="2">
    <location>
        <begin position="1"/>
        <end position="46"/>
    </location>
</feature>
<feature type="transmembrane region" description="Helical" evidence="2">
    <location>
        <begin position="47"/>
        <end position="67"/>
    </location>
</feature>
<feature type="topological domain" description="Extracellular" evidence="2">
    <location>
        <begin position="68"/>
        <end position="96"/>
    </location>
</feature>
<feature type="transmembrane region" description="Helical" evidence="2">
    <location>
        <begin position="97"/>
        <end position="117"/>
    </location>
</feature>
<feature type="topological domain" description="Cytoplasmic" evidence="2">
    <location>
        <begin position="118"/>
        <end position="119"/>
    </location>
</feature>
<feature type="transmembrane region" description="Helical" evidence="2">
    <location>
        <begin position="120"/>
        <end position="139"/>
    </location>
</feature>
<feature type="topological domain" description="Extracellular" evidence="2">
    <location>
        <begin position="140"/>
        <end position="150"/>
    </location>
</feature>
<feature type="transmembrane region" description="Helical" evidence="2">
    <location>
        <begin position="151"/>
        <end position="171"/>
    </location>
</feature>
<feature type="topological domain" description="Cytoplasmic" evidence="2">
    <location>
        <begin position="172"/>
        <end position="174"/>
    </location>
</feature>
<feature type="region of interest" description="Disordered" evidence="3">
    <location>
        <begin position="1"/>
        <end position="25"/>
    </location>
</feature>
<feature type="compositionally biased region" description="Polar residues" evidence="3">
    <location>
        <begin position="8"/>
        <end position="18"/>
    </location>
</feature>
<accession>P0DI29</accession>
<dbReference type="EMBL" id="EY129849">
    <property type="status" value="NOT_ANNOTATED_CDS"/>
    <property type="molecule type" value="mRNA"/>
</dbReference>
<dbReference type="GO" id="GO:0005886">
    <property type="term" value="C:plasma membrane"/>
    <property type="evidence" value="ECO:0007669"/>
    <property type="project" value="UniProtKB-SubCell"/>
</dbReference>
<dbReference type="InterPro" id="IPR006459">
    <property type="entry name" value="CASP/CASPL"/>
</dbReference>
<dbReference type="InterPro" id="IPR006702">
    <property type="entry name" value="CASP_dom"/>
</dbReference>
<dbReference type="InterPro" id="IPR044173">
    <property type="entry name" value="CASPL"/>
</dbReference>
<dbReference type="NCBIfam" id="TIGR01569">
    <property type="entry name" value="A_tha_TIGR01569"/>
    <property type="match status" value="1"/>
</dbReference>
<dbReference type="PANTHER" id="PTHR36488:SF11">
    <property type="entry name" value="CASP-LIKE PROTEIN"/>
    <property type="match status" value="1"/>
</dbReference>
<dbReference type="PANTHER" id="PTHR36488">
    <property type="entry name" value="CASP-LIKE PROTEIN 1U1"/>
    <property type="match status" value="1"/>
</dbReference>
<dbReference type="Pfam" id="PF04535">
    <property type="entry name" value="CASP_dom"/>
    <property type="match status" value="1"/>
</dbReference>
<proteinExistence type="evidence at transcript level"/>
<reference key="1">
    <citation type="submission" date="2007-11" db="EMBL/GenBank/DDBJ databases">
        <title>Early haustorium development in hemiparasitic Orobanchaceae.</title>
        <authorList>
            <person name="Tomilov A.A."/>
            <person name="Tomilova N.B."/>
            <person name="Matvienko M."/>
            <person name="Yoder J.I."/>
        </authorList>
    </citation>
    <scope>NUCLEOTIDE SEQUENCE [LARGE SCALE MRNA]</scope>
    <source>
        <strain>cv. TA-136</strain>
        <tissue>Root tip</tissue>
    </source>
</reference>
<reference key="2">
    <citation type="journal article" date="2014" name="Plant Physiol.">
        <title>Functional and evolutionary analysis of the CASPARIAN STRIP MEMBRANE DOMAIN PROTEIN family.</title>
        <authorList>
            <person name="Roppolo D."/>
            <person name="Boeckmann B."/>
            <person name="Pfister A."/>
            <person name="Boutet E."/>
            <person name="Rubio M.C."/>
            <person name="Denervaud-Tendon V."/>
            <person name="Vermeer J.E."/>
            <person name="Gheyselinck J."/>
            <person name="Xenarios I."/>
            <person name="Geldner N."/>
        </authorList>
    </citation>
    <scope>GENE FAMILY</scope>
    <scope>NOMENCLATURE</scope>
</reference>
<protein>
    <recommendedName>
        <fullName>CASP-like protein 1</fullName>
    </recommendedName>
</protein>